<accession>Q5GWS6</accession>
<comment type="function">
    <text evidence="1">DNA-dependent RNA polymerase catalyzes the transcription of DNA into RNA using the four ribonucleoside triphosphates as substrates.</text>
</comment>
<comment type="catalytic activity">
    <reaction evidence="1">
        <text>RNA(n) + a ribonucleoside 5'-triphosphate = RNA(n+1) + diphosphate</text>
        <dbReference type="Rhea" id="RHEA:21248"/>
        <dbReference type="Rhea" id="RHEA-COMP:14527"/>
        <dbReference type="Rhea" id="RHEA-COMP:17342"/>
        <dbReference type="ChEBI" id="CHEBI:33019"/>
        <dbReference type="ChEBI" id="CHEBI:61557"/>
        <dbReference type="ChEBI" id="CHEBI:140395"/>
        <dbReference type="EC" id="2.7.7.6"/>
    </reaction>
</comment>
<comment type="subunit">
    <text evidence="1">The RNAP catalytic core consists of 2 alpha, 1 beta, 1 beta' and 1 omega subunit. When a sigma factor is associated with the core the holoenzyme is formed, which can initiate transcription.</text>
</comment>
<comment type="similarity">
    <text evidence="1">Belongs to the RNA polymerase beta chain family.</text>
</comment>
<dbReference type="EC" id="2.7.7.6" evidence="1"/>
<dbReference type="EMBL" id="AE013598">
    <property type="protein sequence ID" value="AAW76845.1"/>
    <property type="molecule type" value="Genomic_DNA"/>
</dbReference>
<dbReference type="SMR" id="Q5GWS6"/>
<dbReference type="STRING" id="291331.XOO3591"/>
<dbReference type="KEGG" id="xoo:XOO3591"/>
<dbReference type="HOGENOM" id="CLU_000524_4_3_6"/>
<dbReference type="Proteomes" id="UP000006735">
    <property type="component" value="Chromosome"/>
</dbReference>
<dbReference type="GO" id="GO:0000428">
    <property type="term" value="C:DNA-directed RNA polymerase complex"/>
    <property type="evidence" value="ECO:0007669"/>
    <property type="project" value="UniProtKB-KW"/>
</dbReference>
<dbReference type="GO" id="GO:0003677">
    <property type="term" value="F:DNA binding"/>
    <property type="evidence" value="ECO:0007669"/>
    <property type="project" value="UniProtKB-UniRule"/>
</dbReference>
<dbReference type="GO" id="GO:0003899">
    <property type="term" value="F:DNA-directed RNA polymerase activity"/>
    <property type="evidence" value="ECO:0007669"/>
    <property type="project" value="UniProtKB-UniRule"/>
</dbReference>
<dbReference type="GO" id="GO:0032549">
    <property type="term" value="F:ribonucleoside binding"/>
    <property type="evidence" value="ECO:0007669"/>
    <property type="project" value="InterPro"/>
</dbReference>
<dbReference type="GO" id="GO:0006351">
    <property type="term" value="P:DNA-templated transcription"/>
    <property type="evidence" value="ECO:0007669"/>
    <property type="project" value="UniProtKB-UniRule"/>
</dbReference>
<dbReference type="CDD" id="cd00653">
    <property type="entry name" value="RNA_pol_B_RPB2"/>
    <property type="match status" value="1"/>
</dbReference>
<dbReference type="FunFam" id="2.40.50.100:FF:000006">
    <property type="entry name" value="DNA-directed RNA polymerase subunit beta"/>
    <property type="match status" value="1"/>
</dbReference>
<dbReference type="FunFam" id="2.40.50.150:FF:000001">
    <property type="entry name" value="DNA-directed RNA polymerase subunit beta"/>
    <property type="match status" value="1"/>
</dbReference>
<dbReference type="FunFam" id="3.90.1800.10:FF:000001">
    <property type="entry name" value="DNA-directed RNA polymerase subunit beta"/>
    <property type="match status" value="1"/>
</dbReference>
<dbReference type="Gene3D" id="2.40.50.100">
    <property type="match status" value="1"/>
</dbReference>
<dbReference type="Gene3D" id="2.40.50.150">
    <property type="match status" value="1"/>
</dbReference>
<dbReference type="Gene3D" id="3.90.1100.10">
    <property type="match status" value="2"/>
</dbReference>
<dbReference type="Gene3D" id="6.10.140.1670">
    <property type="match status" value="1"/>
</dbReference>
<dbReference type="Gene3D" id="2.30.150.10">
    <property type="entry name" value="DNA-directed RNA polymerase, beta subunit, external 1 domain"/>
    <property type="match status" value="1"/>
</dbReference>
<dbReference type="Gene3D" id="2.40.270.10">
    <property type="entry name" value="DNA-directed RNA polymerase, subunit 2, domain 6"/>
    <property type="match status" value="1"/>
</dbReference>
<dbReference type="Gene3D" id="3.90.1800.10">
    <property type="entry name" value="RNA polymerase alpha subunit dimerisation domain"/>
    <property type="match status" value="1"/>
</dbReference>
<dbReference type="Gene3D" id="3.90.1110.10">
    <property type="entry name" value="RNA polymerase Rpb2, domain 2"/>
    <property type="match status" value="1"/>
</dbReference>
<dbReference type="HAMAP" id="MF_01321">
    <property type="entry name" value="RNApol_bact_RpoB"/>
    <property type="match status" value="1"/>
</dbReference>
<dbReference type="InterPro" id="IPR042107">
    <property type="entry name" value="DNA-dir_RNA_pol_bsu_ext_1_sf"/>
</dbReference>
<dbReference type="InterPro" id="IPR019462">
    <property type="entry name" value="DNA-dir_RNA_pol_bsu_external_1"/>
</dbReference>
<dbReference type="InterPro" id="IPR015712">
    <property type="entry name" value="DNA-dir_RNA_pol_su2"/>
</dbReference>
<dbReference type="InterPro" id="IPR007120">
    <property type="entry name" value="DNA-dir_RNAP_su2_dom"/>
</dbReference>
<dbReference type="InterPro" id="IPR037033">
    <property type="entry name" value="DNA-dir_RNAP_su2_hyb_sf"/>
</dbReference>
<dbReference type="InterPro" id="IPR010243">
    <property type="entry name" value="RNA_pol_bsu_bac"/>
</dbReference>
<dbReference type="InterPro" id="IPR007121">
    <property type="entry name" value="RNA_pol_bsu_CS"/>
</dbReference>
<dbReference type="InterPro" id="IPR007644">
    <property type="entry name" value="RNA_pol_bsu_protrusion"/>
</dbReference>
<dbReference type="InterPro" id="IPR007642">
    <property type="entry name" value="RNA_pol_Rpb2_2"/>
</dbReference>
<dbReference type="InterPro" id="IPR037034">
    <property type="entry name" value="RNA_pol_Rpb2_2_sf"/>
</dbReference>
<dbReference type="InterPro" id="IPR007645">
    <property type="entry name" value="RNA_pol_Rpb2_3"/>
</dbReference>
<dbReference type="InterPro" id="IPR007641">
    <property type="entry name" value="RNA_pol_Rpb2_7"/>
</dbReference>
<dbReference type="InterPro" id="IPR014724">
    <property type="entry name" value="RNA_pol_RPB2_OB-fold"/>
</dbReference>
<dbReference type="NCBIfam" id="NF001616">
    <property type="entry name" value="PRK00405.1"/>
    <property type="match status" value="1"/>
</dbReference>
<dbReference type="NCBIfam" id="TIGR02013">
    <property type="entry name" value="rpoB"/>
    <property type="match status" value="1"/>
</dbReference>
<dbReference type="PANTHER" id="PTHR20856">
    <property type="entry name" value="DNA-DIRECTED RNA POLYMERASE I SUBUNIT 2"/>
    <property type="match status" value="1"/>
</dbReference>
<dbReference type="Pfam" id="PF04563">
    <property type="entry name" value="RNA_pol_Rpb2_1"/>
    <property type="match status" value="1"/>
</dbReference>
<dbReference type="Pfam" id="PF04561">
    <property type="entry name" value="RNA_pol_Rpb2_2"/>
    <property type="match status" value="3"/>
</dbReference>
<dbReference type="Pfam" id="PF04565">
    <property type="entry name" value="RNA_pol_Rpb2_3"/>
    <property type="match status" value="1"/>
</dbReference>
<dbReference type="Pfam" id="PF10385">
    <property type="entry name" value="RNA_pol_Rpb2_45"/>
    <property type="match status" value="1"/>
</dbReference>
<dbReference type="Pfam" id="PF00562">
    <property type="entry name" value="RNA_pol_Rpb2_6"/>
    <property type="match status" value="1"/>
</dbReference>
<dbReference type="Pfam" id="PF04560">
    <property type="entry name" value="RNA_pol_Rpb2_7"/>
    <property type="match status" value="1"/>
</dbReference>
<dbReference type="SUPFAM" id="SSF64484">
    <property type="entry name" value="beta and beta-prime subunits of DNA dependent RNA-polymerase"/>
    <property type="match status" value="1"/>
</dbReference>
<dbReference type="PROSITE" id="PS01166">
    <property type="entry name" value="RNA_POL_BETA"/>
    <property type="match status" value="1"/>
</dbReference>
<gene>
    <name evidence="1" type="primary">rpoB</name>
    <name type="ordered locus">XOO3591</name>
</gene>
<feature type="chain" id="PRO_0000224122" description="DNA-directed RNA polymerase subunit beta">
    <location>
        <begin position="1"/>
        <end position="1383"/>
    </location>
</feature>
<reference key="1">
    <citation type="journal article" date="2005" name="Nucleic Acids Res.">
        <title>The genome sequence of Xanthomonas oryzae pathovar oryzae KACC10331, the bacterial blight pathogen of rice.</title>
        <authorList>
            <person name="Lee B.-M."/>
            <person name="Park Y.-J."/>
            <person name="Park D.-S."/>
            <person name="Kang H.-W."/>
            <person name="Kim J.-G."/>
            <person name="Song E.-S."/>
            <person name="Park I.-C."/>
            <person name="Yoon U.-H."/>
            <person name="Hahn J.-H."/>
            <person name="Koo B.-S."/>
            <person name="Lee G.-B."/>
            <person name="Kim H."/>
            <person name="Park H.-S."/>
            <person name="Yoon K.-O."/>
            <person name="Kim J.-H."/>
            <person name="Jung C.-H."/>
            <person name="Koh N.-H."/>
            <person name="Seo J.-S."/>
            <person name="Go S.-J."/>
        </authorList>
    </citation>
    <scope>NUCLEOTIDE SEQUENCE [LARGE SCALE GENOMIC DNA]</scope>
    <source>
        <strain>KACC10331 / KXO85</strain>
    </source>
</reference>
<protein>
    <recommendedName>
        <fullName evidence="1">DNA-directed RNA polymerase subunit beta</fullName>
        <shortName evidence="1">RNAP subunit beta</shortName>
        <ecNumber evidence="1">2.7.7.6</ecNumber>
    </recommendedName>
    <alternativeName>
        <fullName evidence="1">RNA polymerase subunit beta</fullName>
    </alternativeName>
    <alternativeName>
        <fullName evidence="1">Transcriptase subunit beta</fullName>
    </alternativeName>
</protein>
<sequence>MTSYSFTEKKRIRKDFGKQRSILEVPFLLAIQVDSYREFLQEDVESTKRKDLGLHAALKSVFPISSYSGNAALEYVGYKLGQPVFDERECRQRGMSYGAPLRVTVRLVIYDRESSTKAIKYVKEQEVYLGEIPLMTGNGTFIVNGTERVIVSQLHRSPGVFFDHDRGKTHSSGKLLYSARIIPYRGSWLDFEFDPKDALFTRIDRRRKLPVSILLRALGYNNEEMLAEFFEINTFHINPDEGVQLELVPERLRGETLNFDLADGDKVIVEAGKRITARHVKQLEAAGVAALAVPDDYLVGRILSHDVVDGSTGELLANANDEISEDQLTAFRKAGVDAVGTLWVNDLDRGPYLSNTLRIDPTKTQLEALVEIYRMMRPGEPPTKEAAQNLFHNLFFTFERYDLSTVGRMKFNRRVGRKDVLGESVLYDKKYFAERNDEESKRLVAEHTDTSDILEVIKVLTEIRNGRGVVDDIDHLGNRRVRSVGEMAENVFRVGLVRVERAVKERLSMAESEGLTPQELINAKPVAAAIKEFFGSSQLSQFMDQNNPLSEVTHKRRVSALGPGGLTRERAGFEVRDVHPTHYGRVCTIETPEGPNIGLINSLAVFARTNQYGFLETPYRKVLDGKVSDDVEYLSAIEENEYVIAQANALTDAKNMLTEQFVPCRFQGESLLKPPSEVHFMDVSPMQTVSVAAALVPFLEHDDANRALMGANMQRQAVPTLRSQKPLVGTGIERAVARDSGVTVNALRGGVIEQIDAARIVVKVNEAEIGGGTDAGVDIYNLIKYTRSNQNTCINQRPLVNVGDVIARGDVLADGPSTDIGELALGQNMLIAFMPWNGYNFEDSILLSERVVEEDRYTTIHIEELTCVARDTKLGPEEISADIPNVSEQALNRLDESGVVYIGAEVRAGDIMVGKVTPKGESQLTPEEKLLRAIFGEKASDVKDSSLRVPPGMDGTVIDVQVFTRDGIEKDKRARQIEENEIKRVKKDFDDQFRILEAAIYARLRSQIVGKVANGGANLKKGDSVTDAYLDGLKKSDWFQLRMKDEDAADAIERAQKQIQAHEKEFEARFADKRGKITQGDDLAPGVLKMVKVFLAVKRRIQPGDKMAGRHGNKGVVSNVVPVEDMPYMATGESVDIVLNPLGVPSRMNIGQILEVHLGWAAKGLGRKIQRMLEAQAAVSELRKFLDDIYNHDNAINAQRVDLSQFSDEELLNLGKNLIDGVPMATPVFDGASEAEIKRMLELADLPQSGQTQLYDGRTGEAFDRKTTVGYMHYLKLNHLVDDKMHARSTGPYSLVTQQPLGGKAQFGGQRFGEMEVWALEAYGAAYTLQEMLTVKSDDVQGRNQMYKNIVDGEHEMVAGMPESFNVLVKEIRSLAIHMELEE</sequence>
<evidence type="ECO:0000255" key="1">
    <source>
        <dbReference type="HAMAP-Rule" id="MF_01321"/>
    </source>
</evidence>
<keyword id="KW-0240">DNA-directed RNA polymerase</keyword>
<keyword id="KW-0548">Nucleotidyltransferase</keyword>
<keyword id="KW-1185">Reference proteome</keyword>
<keyword id="KW-0804">Transcription</keyword>
<keyword id="KW-0808">Transferase</keyword>
<proteinExistence type="inferred from homology"/>
<organism>
    <name type="scientific">Xanthomonas oryzae pv. oryzae (strain KACC10331 / KXO85)</name>
    <dbReference type="NCBI Taxonomy" id="291331"/>
    <lineage>
        <taxon>Bacteria</taxon>
        <taxon>Pseudomonadati</taxon>
        <taxon>Pseudomonadota</taxon>
        <taxon>Gammaproteobacteria</taxon>
        <taxon>Lysobacterales</taxon>
        <taxon>Lysobacteraceae</taxon>
        <taxon>Xanthomonas</taxon>
    </lineage>
</organism>
<name>RPOB_XANOR</name>